<protein>
    <recommendedName>
        <fullName evidence="1">UDP-3-O-acylglucosamine N-acyltransferase</fullName>
        <ecNumber evidence="1">2.3.1.191</ecNumber>
    </recommendedName>
</protein>
<organism>
    <name type="scientific">Burkholderia orbicola (strain AU 1054)</name>
    <dbReference type="NCBI Taxonomy" id="331271"/>
    <lineage>
        <taxon>Bacteria</taxon>
        <taxon>Pseudomonadati</taxon>
        <taxon>Pseudomonadota</taxon>
        <taxon>Betaproteobacteria</taxon>
        <taxon>Burkholderiales</taxon>
        <taxon>Burkholderiaceae</taxon>
        <taxon>Burkholderia</taxon>
        <taxon>Burkholderia cepacia complex</taxon>
        <taxon>Burkholderia orbicola</taxon>
    </lineage>
</organism>
<proteinExistence type="inferred from homology"/>
<dbReference type="EC" id="2.3.1.191" evidence="1"/>
<dbReference type="EMBL" id="CP000380">
    <property type="protein sequence ID" value="ABF80933.1"/>
    <property type="molecule type" value="Genomic_DNA"/>
</dbReference>
<dbReference type="SMR" id="Q1BHH2"/>
<dbReference type="HOGENOM" id="CLU_049865_0_0_4"/>
<dbReference type="UniPathway" id="UPA00973"/>
<dbReference type="GO" id="GO:0016020">
    <property type="term" value="C:membrane"/>
    <property type="evidence" value="ECO:0007669"/>
    <property type="project" value="GOC"/>
</dbReference>
<dbReference type="GO" id="GO:0016410">
    <property type="term" value="F:N-acyltransferase activity"/>
    <property type="evidence" value="ECO:0007669"/>
    <property type="project" value="InterPro"/>
</dbReference>
<dbReference type="GO" id="GO:0009245">
    <property type="term" value="P:lipid A biosynthetic process"/>
    <property type="evidence" value="ECO:0007669"/>
    <property type="project" value="UniProtKB-UniRule"/>
</dbReference>
<dbReference type="CDD" id="cd03352">
    <property type="entry name" value="LbH_LpxD"/>
    <property type="match status" value="1"/>
</dbReference>
<dbReference type="Gene3D" id="1.20.5.170">
    <property type="match status" value="1"/>
</dbReference>
<dbReference type="Gene3D" id="2.160.10.10">
    <property type="entry name" value="Hexapeptide repeat proteins"/>
    <property type="match status" value="1"/>
</dbReference>
<dbReference type="Gene3D" id="3.40.1390.10">
    <property type="entry name" value="MurE/MurF, N-terminal domain"/>
    <property type="match status" value="1"/>
</dbReference>
<dbReference type="HAMAP" id="MF_00523">
    <property type="entry name" value="LpxD"/>
    <property type="match status" value="1"/>
</dbReference>
<dbReference type="InterPro" id="IPR001451">
    <property type="entry name" value="Hexapep"/>
</dbReference>
<dbReference type="InterPro" id="IPR018357">
    <property type="entry name" value="Hexapep_transf_CS"/>
</dbReference>
<dbReference type="InterPro" id="IPR007691">
    <property type="entry name" value="LpxD"/>
</dbReference>
<dbReference type="InterPro" id="IPR011004">
    <property type="entry name" value="Trimer_LpxA-like_sf"/>
</dbReference>
<dbReference type="InterPro" id="IPR020573">
    <property type="entry name" value="UDP_GlcNAc_AcTrfase_non-rep"/>
</dbReference>
<dbReference type="NCBIfam" id="TIGR01853">
    <property type="entry name" value="lipid_A_lpxD"/>
    <property type="match status" value="1"/>
</dbReference>
<dbReference type="NCBIfam" id="NF002060">
    <property type="entry name" value="PRK00892.1"/>
    <property type="match status" value="1"/>
</dbReference>
<dbReference type="PANTHER" id="PTHR43378">
    <property type="entry name" value="UDP-3-O-ACYLGLUCOSAMINE N-ACYLTRANSFERASE"/>
    <property type="match status" value="1"/>
</dbReference>
<dbReference type="PANTHER" id="PTHR43378:SF2">
    <property type="entry name" value="UDP-3-O-ACYLGLUCOSAMINE N-ACYLTRANSFERASE 1, MITOCHONDRIAL-RELATED"/>
    <property type="match status" value="1"/>
</dbReference>
<dbReference type="Pfam" id="PF00132">
    <property type="entry name" value="Hexapep"/>
    <property type="match status" value="2"/>
</dbReference>
<dbReference type="Pfam" id="PF14602">
    <property type="entry name" value="Hexapep_2"/>
    <property type="match status" value="1"/>
</dbReference>
<dbReference type="Pfam" id="PF04613">
    <property type="entry name" value="LpxD"/>
    <property type="match status" value="1"/>
</dbReference>
<dbReference type="SUPFAM" id="SSF51161">
    <property type="entry name" value="Trimeric LpxA-like enzymes"/>
    <property type="match status" value="1"/>
</dbReference>
<dbReference type="PROSITE" id="PS00101">
    <property type="entry name" value="HEXAPEP_TRANSFERASES"/>
    <property type="match status" value="3"/>
</dbReference>
<feature type="chain" id="PRO_0000264350" description="UDP-3-O-acylglucosamine N-acyltransferase">
    <location>
        <begin position="1"/>
        <end position="364"/>
    </location>
</feature>
<feature type="active site" description="Proton acceptor" evidence="1">
    <location>
        <position position="258"/>
    </location>
</feature>
<gene>
    <name evidence="1" type="primary">lpxD</name>
    <name type="ordered locus">Bcen_6068</name>
</gene>
<reference key="1">
    <citation type="submission" date="2006-05" db="EMBL/GenBank/DDBJ databases">
        <title>Complete sequence of chromosome 3 of Burkholderia cenocepacia AU 1054.</title>
        <authorList>
            <consortium name="US DOE Joint Genome Institute"/>
            <person name="Copeland A."/>
            <person name="Lucas S."/>
            <person name="Lapidus A."/>
            <person name="Barry K."/>
            <person name="Detter J.C."/>
            <person name="Glavina del Rio T."/>
            <person name="Hammon N."/>
            <person name="Israni S."/>
            <person name="Dalin E."/>
            <person name="Tice H."/>
            <person name="Pitluck S."/>
            <person name="Chain P."/>
            <person name="Malfatti S."/>
            <person name="Shin M."/>
            <person name="Vergez L."/>
            <person name="Schmutz J."/>
            <person name="Larimer F."/>
            <person name="Land M."/>
            <person name="Hauser L."/>
            <person name="Kyrpides N."/>
            <person name="Lykidis A."/>
            <person name="LiPuma J.J."/>
            <person name="Konstantinidis K."/>
            <person name="Tiedje J.M."/>
            <person name="Richardson P."/>
        </authorList>
    </citation>
    <scope>NUCLEOTIDE SEQUENCE [LARGE SCALE GENOMIC DNA]</scope>
    <source>
        <strain>AU 1054</strain>
    </source>
</reference>
<keyword id="KW-0012">Acyltransferase</keyword>
<keyword id="KW-0441">Lipid A biosynthesis</keyword>
<keyword id="KW-0444">Lipid biosynthesis</keyword>
<keyword id="KW-0443">Lipid metabolism</keyword>
<keyword id="KW-0677">Repeat</keyword>
<keyword id="KW-0808">Transferase</keyword>
<name>LPXD_BURO1</name>
<accession>Q1BHH2</accession>
<comment type="function">
    <text evidence="1">Catalyzes the N-acylation of UDP-3-O-acylglucosamine using 3-hydroxyacyl-ACP as the acyl donor. Is involved in the biosynthesis of lipid A, a phosphorylated glycolipid that anchors the lipopolysaccharide to the outer membrane of the cell.</text>
</comment>
<comment type="catalytic activity">
    <reaction evidence="1">
        <text>a UDP-3-O-[(3R)-3-hydroxyacyl]-alpha-D-glucosamine + a (3R)-hydroxyacyl-[ACP] = a UDP-2-N,3-O-bis[(3R)-3-hydroxyacyl]-alpha-D-glucosamine + holo-[ACP] + H(+)</text>
        <dbReference type="Rhea" id="RHEA:53836"/>
        <dbReference type="Rhea" id="RHEA-COMP:9685"/>
        <dbReference type="Rhea" id="RHEA-COMP:9945"/>
        <dbReference type="ChEBI" id="CHEBI:15378"/>
        <dbReference type="ChEBI" id="CHEBI:64479"/>
        <dbReference type="ChEBI" id="CHEBI:78827"/>
        <dbReference type="ChEBI" id="CHEBI:137740"/>
        <dbReference type="ChEBI" id="CHEBI:137748"/>
        <dbReference type="EC" id="2.3.1.191"/>
    </reaction>
</comment>
<comment type="pathway">
    <text evidence="1">Bacterial outer membrane biogenesis; LPS lipid A biosynthesis.</text>
</comment>
<comment type="subunit">
    <text evidence="1">Homotrimer.</text>
</comment>
<comment type="similarity">
    <text evidence="1">Belongs to the transferase hexapeptide repeat family. LpxD subfamily.</text>
</comment>
<sequence>MALTLEELVKRFGGEIAGDAQCKVGGLAPLDQAGPQQLAFLANPKYLSQVESTRAGAVLIAPKDLEKLGAAAQGRTAGPRNFIVTPNPYAYFARVAQMFIDLATPPRAAGVHPSATIDPAAKVAATAVIGPHVTIEAGAVIEDGVQLDANVFVGRGTTIGAGSHFYPNASVYHGCKVGPRAIVHAGAVIGSDGFGFAPDFVGDGDARTGSWVKIPQVGGVTIGPDVEIGANTTIDRGAMADTVIEECVKIDNQVQIGHNCRIGAYTVIAGSAGIAGSTTIGRHCMIGGAAGIAGHVTLGDYVIITAKSGVSKSLPKAGIYTSAFPAVDHGEWNKSAALVRNLDKLRERIKALEAALAAQGGTDA</sequence>
<evidence type="ECO:0000255" key="1">
    <source>
        <dbReference type="HAMAP-Rule" id="MF_00523"/>
    </source>
</evidence>